<evidence type="ECO:0000250" key="1"/>
<evidence type="ECO:0000250" key="2">
    <source>
        <dbReference type="UniProtKB" id="Q5EBH1"/>
    </source>
</evidence>
<evidence type="ECO:0000250" key="3">
    <source>
        <dbReference type="UniProtKB" id="Q8WWW0"/>
    </source>
</evidence>
<evidence type="ECO:0000255" key="4">
    <source>
        <dbReference type="PROSITE-ProRule" id="PRU00166"/>
    </source>
</evidence>
<evidence type="ECO:0000255" key="5">
    <source>
        <dbReference type="PROSITE-ProRule" id="PRU00226"/>
    </source>
</evidence>
<evidence type="ECO:0000255" key="6">
    <source>
        <dbReference type="PROSITE-ProRule" id="PRU00310"/>
    </source>
</evidence>
<evidence type="ECO:0000256" key="7">
    <source>
        <dbReference type="SAM" id="MobiDB-lite"/>
    </source>
</evidence>
<evidence type="ECO:0007744" key="8">
    <source>
    </source>
</evidence>
<protein>
    <recommendedName>
        <fullName>Ras association domain-containing protein 5</fullName>
    </recommendedName>
    <alternativeName>
        <fullName>Maxp1</fullName>
    </alternativeName>
    <alternativeName>
        <fullName>New ras effector 1</fullName>
    </alternativeName>
</protein>
<dbReference type="EMBL" id="AF002251">
    <property type="protein sequence ID" value="AAB71821.1"/>
    <property type="molecule type" value="mRNA"/>
</dbReference>
<dbReference type="RefSeq" id="NP_062238.1">
    <property type="nucleotide sequence ID" value="NM_019365.4"/>
</dbReference>
<dbReference type="SMR" id="O35141"/>
<dbReference type="FunCoup" id="O35141">
    <property type="interactions" value="636"/>
</dbReference>
<dbReference type="STRING" id="10116.ENSRNOP00000008055"/>
<dbReference type="GlyGen" id="O35141">
    <property type="glycosylation" value="1 site"/>
</dbReference>
<dbReference type="iPTMnet" id="O35141"/>
<dbReference type="PhosphoSitePlus" id="O35141"/>
<dbReference type="PaxDb" id="10116-ENSRNOP00000008055"/>
<dbReference type="Ensembl" id="ENSRNOT00000008055.6">
    <property type="protein sequence ID" value="ENSRNOP00000008055.3"/>
    <property type="gene ID" value="ENSRNOG00000005342.8"/>
</dbReference>
<dbReference type="GeneID" id="54355"/>
<dbReference type="KEGG" id="rno:54355"/>
<dbReference type="UCSC" id="RGD:621694">
    <property type="organism name" value="rat"/>
</dbReference>
<dbReference type="AGR" id="RGD:621694"/>
<dbReference type="CTD" id="83593"/>
<dbReference type="RGD" id="621694">
    <property type="gene designation" value="Rassf5"/>
</dbReference>
<dbReference type="eggNOG" id="KOG4239">
    <property type="taxonomic scope" value="Eukaryota"/>
</dbReference>
<dbReference type="GeneTree" id="ENSGT00940000159288"/>
<dbReference type="HOGENOM" id="CLU_045544_0_0_1"/>
<dbReference type="InParanoid" id="O35141"/>
<dbReference type="OrthoDB" id="74314at2759"/>
<dbReference type="PhylomeDB" id="O35141"/>
<dbReference type="TreeFam" id="TF319243"/>
<dbReference type="PRO" id="PR:O35141"/>
<dbReference type="Proteomes" id="UP000002494">
    <property type="component" value="Chromosome 13"/>
</dbReference>
<dbReference type="Bgee" id="ENSRNOG00000005342">
    <property type="expression patterns" value="Expressed in spleen and 20 other cell types or tissues"/>
</dbReference>
<dbReference type="ExpressionAtlas" id="O35141">
    <property type="expression patterns" value="baseline and differential"/>
</dbReference>
<dbReference type="GO" id="GO:0005737">
    <property type="term" value="C:cytoplasm"/>
    <property type="evidence" value="ECO:0007669"/>
    <property type="project" value="UniProtKB-SubCell"/>
</dbReference>
<dbReference type="GO" id="GO:0005874">
    <property type="term" value="C:microtubule"/>
    <property type="evidence" value="ECO:0007669"/>
    <property type="project" value="UniProtKB-KW"/>
</dbReference>
<dbReference type="GO" id="GO:0005634">
    <property type="term" value="C:nucleus"/>
    <property type="evidence" value="ECO:0000266"/>
    <property type="project" value="RGD"/>
</dbReference>
<dbReference type="GO" id="GO:0008270">
    <property type="term" value="F:zinc ion binding"/>
    <property type="evidence" value="ECO:0007669"/>
    <property type="project" value="UniProtKB-KW"/>
</dbReference>
<dbReference type="GO" id="GO:0006915">
    <property type="term" value="P:apoptotic process"/>
    <property type="evidence" value="ECO:0007669"/>
    <property type="project" value="UniProtKB-KW"/>
</dbReference>
<dbReference type="GO" id="GO:0046651">
    <property type="term" value="P:lymphocyte proliferation"/>
    <property type="evidence" value="ECO:0000266"/>
    <property type="project" value="RGD"/>
</dbReference>
<dbReference type="GO" id="GO:0050672">
    <property type="term" value="P:negative regulation of lymphocyte proliferation"/>
    <property type="evidence" value="ECO:0000266"/>
    <property type="project" value="RGD"/>
</dbReference>
<dbReference type="GO" id="GO:0031398">
    <property type="term" value="P:positive regulation of protein ubiquitination"/>
    <property type="evidence" value="ECO:0000266"/>
    <property type="project" value="RGD"/>
</dbReference>
<dbReference type="GO" id="GO:1900180">
    <property type="term" value="P:regulation of protein localization to nucleus"/>
    <property type="evidence" value="ECO:0000266"/>
    <property type="project" value="RGD"/>
</dbReference>
<dbReference type="GO" id="GO:0007165">
    <property type="term" value="P:signal transduction"/>
    <property type="evidence" value="ECO:0000318"/>
    <property type="project" value="GO_Central"/>
</dbReference>
<dbReference type="CDD" id="cd20886">
    <property type="entry name" value="C1_RASSF5"/>
    <property type="match status" value="1"/>
</dbReference>
<dbReference type="CDD" id="cd17220">
    <property type="entry name" value="RA_RASSF5"/>
    <property type="match status" value="1"/>
</dbReference>
<dbReference type="CDD" id="cd21892">
    <property type="entry name" value="SARAH_RASSF5"/>
    <property type="match status" value="1"/>
</dbReference>
<dbReference type="FunFam" id="3.10.20.90:FF:000048">
    <property type="entry name" value="Ras association domain family member 1"/>
    <property type="match status" value="1"/>
</dbReference>
<dbReference type="FunFam" id="1.20.5.110:FF:000032">
    <property type="entry name" value="Ras association domain family member 5"/>
    <property type="match status" value="1"/>
</dbReference>
<dbReference type="FunFam" id="3.30.60.20:FF:000057">
    <property type="entry name" value="Ras association domain family member 5"/>
    <property type="match status" value="1"/>
</dbReference>
<dbReference type="Gene3D" id="1.20.5.110">
    <property type="match status" value="1"/>
</dbReference>
<dbReference type="Gene3D" id="3.30.60.20">
    <property type="match status" value="1"/>
</dbReference>
<dbReference type="Gene3D" id="3.10.20.90">
    <property type="entry name" value="Phosphatidylinositol 3-kinase Catalytic Subunit, Chain A, domain 1"/>
    <property type="match status" value="1"/>
</dbReference>
<dbReference type="InterPro" id="IPR046349">
    <property type="entry name" value="C1-like_sf"/>
</dbReference>
<dbReference type="InterPro" id="IPR002219">
    <property type="entry name" value="PE/DAG-bd"/>
</dbReference>
<dbReference type="InterPro" id="IPR000159">
    <property type="entry name" value="RA_dom"/>
</dbReference>
<dbReference type="InterPro" id="IPR033614">
    <property type="entry name" value="RASSF1-6"/>
</dbReference>
<dbReference type="InterPro" id="IPR033623">
    <property type="entry name" value="RASSF5_RA"/>
</dbReference>
<dbReference type="InterPro" id="IPR011524">
    <property type="entry name" value="SARAH_dom"/>
</dbReference>
<dbReference type="InterPro" id="IPR029071">
    <property type="entry name" value="Ubiquitin-like_domsf"/>
</dbReference>
<dbReference type="PANTHER" id="PTHR22738:SF9">
    <property type="entry name" value="RAS ASSOCIATION DOMAIN-CONTAINING PROTEIN 5"/>
    <property type="match status" value="1"/>
</dbReference>
<dbReference type="PANTHER" id="PTHR22738">
    <property type="entry name" value="RASSF"/>
    <property type="match status" value="1"/>
</dbReference>
<dbReference type="Pfam" id="PF00130">
    <property type="entry name" value="C1_1"/>
    <property type="match status" value="1"/>
</dbReference>
<dbReference type="Pfam" id="PF16517">
    <property type="entry name" value="Nore1-SARAH"/>
    <property type="match status" value="1"/>
</dbReference>
<dbReference type="Pfam" id="PF00788">
    <property type="entry name" value="RA"/>
    <property type="match status" value="1"/>
</dbReference>
<dbReference type="SMART" id="SM00109">
    <property type="entry name" value="C1"/>
    <property type="match status" value="1"/>
</dbReference>
<dbReference type="SMART" id="SM00314">
    <property type="entry name" value="RA"/>
    <property type="match status" value="1"/>
</dbReference>
<dbReference type="SUPFAM" id="SSF57889">
    <property type="entry name" value="Cysteine-rich domain"/>
    <property type="match status" value="1"/>
</dbReference>
<dbReference type="SUPFAM" id="SSF54236">
    <property type="entry name" value="Ubiquitin-like"/>
    <property type="match status" value="1"/>
</dbReference>
<dbReference type="PROSITE" id="PS50200">
    <property type="entry name" value="RA"/>
    <property type="match status" value="1"/>
</dbReference>
<dbReference type="PROSITE" id="PS50951">
    <property type="entry name" value="SARAH"/>
    <property type="match status" value="1"/>
</dbReference>
<dbReference type="PROSITE" id="PS00479">
    <property type="entry name" value="ZF_DAG_PE_1"/>
    <property type="match status" value="1"/>
</dbReference>
<dbReference type="PROSITE" id="PS50081">
    <property type="entry name" value="ZF_DAG_PE_2"/>
    <property type="match status" value="1"/>
</dbReference>
<sequence>MASPAIGQRPYPLLLDPEPPRYLQSLGGTEPPPPARPRRCIPTALISASGASEGRGSRRNARGDPEPTPRDCRHARPVRPGLQQRLRRRPGSHRPRDVRSIFEQPQDPRVLAERGEGHRFAELALRGGPGWCDLCGREVLRQALRCANCKFTCHPECRSLIQLDCRQKEGPALDRQSPESTLTPTFNKNVCKAVEETQHPPTIQEIKQKIDSYNSREKHCLGMKLSEDGTYTGFIKVHLKLRRPVTVPAGIRPQSIYDAIKEVNPAATTDKRTSFYLPLDAIKQLHISSSTTVSEVIQGLLKKFMVVDNPQKFALFKRIHKDGQVLFQKLSIADCPLYLRLLAGPDTDVLSFVLKENETGDVEWDAFSIPELQNFLTILEKEEQDKIHQLQKKYNKFRQKLEEALRESQGKPG</sequence>
<gene>
    <name type="primary">Rassf5</name>
    <name type="synonym">Nore1</name>
</gene>
<reference key="1">
    <citation type="submission" date="1997-05" db="EMBL/GenBank/DDBJ databases">
        <title>Maxp1, protein interacting with guanine nucleotide exchange factor Mss4.</title>
        <authorList>
            <person name="Slepnev V.I."/>
            <person name="De Camilli P.V."/>
        </authorList>
    </citation>
    <scope>NUCLEOTIDE SEQUENCE [MRNA]</scope>
</reference>
<reference key="2">
    <citation type="journal article" date="2003" name="J. Biol. Chem.">
        <title>The pro-apoptotic Ras effector Nore1 may serve as a Ras-regulated tumor suppressor in the lung.</title>
        <authorList>
            <person name="Vos M.D."/>
            <person name="Martinez A."/>
            <person name="Ellis C.A."/>
            <person name="Vallecorsa T."/>
            <person name="Clark G.J."/>
        </authorList>
    </citation>
    <scope>INTERACTION WITH HRAS</scope>
</reference>
<reference key="3">
    <citation type="journal article" date="2012" name="Nat. Commun.">
        <title>Quantitative maps of protein phosphorylation sites across 14 different rat organs and tissues.</title>
        <authorList>
            <person name="Lundby A."/>
            <person name="Secher A."/>
            <person name="Lage K."/>
            <person name="Nordsborg N.B."/>
            <person name="Dmytriyev A."/>
            <person name="Lundby C."/>
            <person name="Olsen J.V."/>
        </authorList>
    </citation>
    <scope>PHOSPHORYLATION [LARGE SCALE ANALYSIS] AT SER-177</scope>
    <scope>IDENTIFICATION BY MASS SPECTROMETRY [LARGE SCALE ANALYSIS]</scope>
</reference>
<organism>
    <name type="scientific">Rattus norvegicus</name>
    <name type="common">Rat</name>
    <dbReference type="NCBI Taxonomy" id="10116"/>
    <lineage>
        <taxon>Eukaryota</taxon>
        <taxon>Metazoa</taxon>
        <taxon>Chordata</taxon>
        <taxon>Craniata</taxon>
        <taxon>Vertebrata</taxon>
        <taxon>Euteleostomi</taxon>
        <taxon>Mammalia</taxon>
        <taxon>Eutheria</taxon>
        <taxon>Euarchontoglires</taxon>
        <taxon>Glires</taxon>
        <taxon>Rodentia</taxon>
        <taxon>Myomorpha</taxon>
        <taxon>Muroidea</taxon>
        <taxon>Muridae</taxon>
        <taxon>Murinae</taxon>
        <taxon>Rattus</taxon>
    </lineage>
</organism>
<proteinExistence type="evidence at protein level"/>
<comment type="function">
    <text evidence="1">Potential tumor suppressor. Seems to be involved in lymphocyte adhesion by linking RAP1A activation upon T-cell receptor or chemokine stimulation to integrin activation. Stimulates lymphocyte polarization and the patch-like distribution of ITGAL/LFA-1, resulting in an enhanced adhesion to ICAM1. Together with RAP1A may participate in regulation of microtubule growth. The association with activated RAP1A is required for directional movement of endothelial cells during wound healing. May be involved in regulation of Ras apoptotic function. The RASSF5-STK4/MST1 complex may mediate HRAS and KRAS induced apoptosis (By similarity).</text>
</comment>
<comment type="subunit">
    <text evidence="2 3">Interacts directly with activated HRAS; a RASSF5-STK4/MST1 complex probably associates with activated HRAS. Interacts with KRAS. Probably interacts with Ras-like GTPases RRAS, MRAS, RAP1B, RAP2A and RALA (By similarity). Interacts with RRAS2 (By similarity). Can self-associate. Interacts with RSSF1 isoform A. The RSSF1 isoform A-RSSF5 heterodimer probably mediates the association of RSSF1 with HRAS (By similarity). Isoform 2 interacts with activated RAP1A and ITGAL/LFA-1. Binds STK4/MST1, inhibiting STK4/MST1 autoactivation (By similarity).</text>
</comment>
<comment type="subcellular location">
    <subcellularLocation>
        <location evidence="1">Cytoplasm</location>
    </subcellularLocation>
    <subcellularLocation>
        <location evidence="1">Cytoplasm</location>
        <location evidence="1">Cytoskeleton</location>
    </subcellularLocation>
    <text evidence="1">Mainly located in the perinuclear region of unstimulated primary T-cells; upon stimulation translocates to the leading edge and colocalizes with ITGAL/LFA-1 in the peripheral zone of the immunological synapse. Localized to growing microtubules in vascular endothelial cells and is dissociated from microtubules by activated RAP1A (By similarity).</text>
</comment>
<feature type="chain" id="PRO_0000240403" description="Ras association domain-containing protein 5">
    <location>
        <begin position="1"/>
        <end position="413"/>
    </location>
</feature>
<feature type="domain" description="Ras-associating" evidence="4">
    <location>
        <begin position="265"/>
        <end position="359"/>
    </location>
</feature>
<feature type="domain" description="SARAH" evidence="6">
    <location>
        <begin position="361"/>
        <end position="408"/>
    </location>
</feature>
<feature type="zinc finger region" description="Phorbol-ester/DAG-type" evidence="5">
    <location>
        <begin position="117"/>
        <end position="165"/>
    </location>
</feature>
<feature type="region of interest" description="Disordered" evidence="7">
    <location>
        <begin position="1"/>
        <end position="105"/>
    </location>
</feature>
<feature type="compositionally biased region" description="Basic and acidic residues" evidence="7">
    <location>
        <begin position="61"/>
        <end position="74"/>
    </location>
</feature>
<feature type="modified residue" description="Phosphoserine" evidence="8">
    <location>
        <position position="177"/>
    </location>
</feature>
<feature type="modified residue" description="Phosphoserine" evidence="3">
    <location>
        <position position="274"/>
    </location>
</feature>
<feature type="modified residue" description="Phosphothreonine" evidence="3">
    <location>
        <position position="347"/>
    </location>
</feature>
<name>RASF5_RAT</name>
<accession>O35141</accession>
<keyword id="KW-0053">Apoptosis</keyword>
<keyword id="KW-0963">Cytoplasm</keyword>
<keyword id="KW-0206">Cytoskeleton</keyword>
<keyword id="KW-0479">Metal-binding</keyword>
<keyword id="KW-0493">Microtubule</keyword>
<keyword id="KW-0597">Phosphoprotein</keyword>
<keyword id="KW-1185">Reference proteome</keyword>
<keyword id="KW-0043">Tumor suppressor</keyword>
<keyword id="KW-0862">Zinc</keyword>
<keyword id="KW-0863">Zinc-finger</keyword>